<accession>A8C8W6</accession>
<evidence type="ECO:0000255" key="1">
    <source>
        <dbReference type="HAMAP-Rule" id="MF_04071"/>
    </source>
</evidence>
<keyword id="KW-0106">Calcium</keyword>
<keyword id="KW-1015">Disulfide bond</keyword>
<keyword id="KW-0325">Glycoprotein</keyword>
<keyword id="KW-0326">Glycosidase</keyword>
<keyword id="KW-1032">Host cell membrane</keyword>
<keyword id="KW-1043">Host membrane</keyword>
<keyword id="KW-0378">Hydrolase</keyword>
<keyword id="KW-0472">Membrane</keyword>
<keyword id="KW-0479">Metal-binding</keyword>
<keyword id="KW-0735">Signal-anchor</keyword>
<keyword id="KW-0812">Transmembrane</keyword>
<keyword id="KW-1133">Transmembrane helix</keyword>
<keyword id="KW-0946">Virion</keyword>
<dbReference type="EC" id="3.2.1.18" evidence="1"/>
<dbReference type="EMBL" id="CY026293">
    <property type="protein sequence ID" value="ABV82587.1"/>
    <property type="molecule type" value="Viral_cRNA"/>
</dbReference>
<dbReference type="SMR" id="A8C8W6"/>
<dbReference type="CAZy" id="GH34">
    <property type="family name" value="Glycoside Hydrolase Family 34"/>
</dbReference>
<dbReference type="GlyCosmos" id="A8C8W6">
    <property type="glycosylation" value="7 sites, No reported glycans"/>
</dbReference>
<dbReference type="Proteomes" id="UP000116872">
    <property type="component" value="Genome"/>
</dbReference>
<dbReference type="GO" id="GO:0020002">
    <property type="term" value="C:host cell plasma membrane"/>
    <property type="evidence" value="ECO:0007669"/>
    <property type="project" value="UniProtKB-SubCell"/>
</dbReference>
<dbReference type="GO" id="GO:0016020">
    <property type="term" value="C:membrane"/>
    <property type="evidence" value="ECO:0007669"/>
    <property type="project" value="UniProtKB-UniRule"/>
</dbReference>
<dbReference type="GO" id="GO:0055036">
    <property type="term" value="C:virion membrane"/>
    <property type="evidence" value="ECO:0007669"/>
    <property type="project" value="UniProtKB-SubCell"/>
</dbReference>
<dbReference type="GO" id="GO:0004308">
    <property type="term" value="F:exo-alpha-sialidase activity"/>
    <property type="evidence" value="ECO:0007669"/>
    <property type="project" value="UniProtKB-UniRule"/>
</dbReference>
<dbReference type="GO" id="GO:0046872">
    <property type="term" value="F:metal ion binding"/>
    <property type="evidence" value="ECO:0007669"/>
    <property type="project" value="UniProtKB-UniRule"/>
</dbReference>
<dbReference type="GO" id="GO:0005975">
    <property type="term" value="P:carbohydrate metabolic process"/>
    <property type="evidence" value="ECO:0007669"/>
    <property type="project" value="InterPro"/>
</dbReference>
<dbReference type="GO" id="GO:0046761">
    <property type="term" value="P:viral budding from plasma membrane"/>
    <property type="evidence" value="ECO:0007669"/>
    <property type="project" value="UniProtKB-UniRule"/>
</dbReference>
<dbReference type="CDD" id="cd15483">
    <property type="entry name" value="Influenza_NA"/>
    <property type="match status" value="1"/>
</dbReference>
<dbReference type="FunFam" id="2.120.10.10:FF:000001">
    <property type="entry name" value="Neuraminidase"/>
    <property type="match status" value="1"/>
</dbReference>
<dbReference type="Gene3D" id="2.120.10.10">
    <property type="match status" value="1"/>
</dbReference>
<dbReference type="HAMAP" id="MF_04071">
    <property type="entry name" value="INFV_NRAM"/>
    <property type="match status" value="1"/>
</dbReference>
<dbReference type="InterPro" id="IPR001860">
    <property type="entry name" value="Glyco_hydro_34"/>
</dbReference>
<dbReference type="InterPro" id="IPR033654">
    <property type="entry name" value="Sialidase_Influenza_A/B"/>
</dbReference>
<dbReference type="InterPro" id="IPR036278">
    <property type="entry name" value="Sialidase_sf"/>
</dbReference>
<dbReference type="Pfam" id="PF00064">
    <property type="entry name" value="Neur"/>
    <property type="match status" value="1"/>
</dbReference>
<dbReference type="SUPFAM" id="SSF50939">
    <property type="entry name" value="Sialidases"/>
    <property type="match status" value="1"/>
</dbReference>
<name>NRAM_I67A2</name>
<organism>
    <name type="scientific">Influenza A virus (strain A/Swine/Wisconsin/1/1967 H1N1)</name>
    <dbReference type="NCBI Taxonomy" id="382855"/>
    <lineage>
        <taxon>Viruses</taxon>
        <taxon>Riboviria</taxon>
        <taxon>Orthornavirae</taxon>
        <taxon>Negarnaviricota</taxon>
        <taxon>Polyploviricotina</taxon>
        <taxon>Insthoviricetes</taxon>
        <taxon>Articulavirales</taxon>
        <taxon>Orthomyxoviridae</taxon>
        <taxon>Alphainfluenzavirus</taxon>
        <taxon>Alphainfluenzavirus influenzae</taxon>
        <taxon>Influenza A virus</taxon>
    </lineage>
</organism>
<comment type="function">
    <text evidence="1">Catalyzes the removal of terminal sialic acid residues from viral and cellular glycoconjugates. Cleaves off the terminal sialic acids on the glycosylated HA during virus budding to facilitate virus release. Additionally helps virus spread through the circulation by further removing sialic acids from the cell surface. These cleavages prevent self-aggregation and ensure the efficient spread of the progeny virus from cell to cell. Otherwise, infection would be limited to one round of replication. Described as a receptor-destroying enzyme because it cleaves a terminal sialic acid from the cellular receptors. May facilitate viral invasion of the upper airways by cleaving the sialic acid moieties on the mucin of the airway epithelial cells. Likely to plays a role in the budding process through its association with lipid rafts during intracellular transport. May additionally display a raft-association independent effect on budding. Plays a role in the determination of host range restriction on replication and virulence. Sialidase activity in late endosome/lysosome traffic seems to enhance virus replication.</text>
</comment>
<comment type="catalytic activity">
    <reaction evidence="1">
        <text>Hydrolysis of alpha-(2-&gt;3)-, alpha-(2-&gt;6)-, alpha-(2-&gt;8)- glycosidic linkages of terminal sialic acid residues in oligosaccharides, glycoproteins, glycolipids, colominic acid and synthetic substrates.</text>
        <dbReference type="EC" id="3.2.1.18"/>
    </reaction>
</comment>
<comment type="cofactor">
    <cofactor evidence="1">
        <name>Ca(2+)</name>
        <dbReference type="ChEBI" id="CHEBI:29108"/>
    </cofactor>
</comment>
<comment type="activity regulation">
    <text evidence="1">Inhibited by the neuraminidase inhibitors zanamivir (Relenza) and oseltamivir (Tamiflu). These drugs interfere with the release of progeny virus from infected cells and are effective against all influenza strains. Resistance to neuraminidase inhibitors is quite rare.</text>
</comment>
<comment type="subunit">
    <text evidence="1">Homotetramer.</text>
</comment>
<comment type="subcellular location">
    <subcellularLocation>
        <location evidence="1">Virion membrane</location>
    </subcellularLocation>
    <subcellularLocation>
        <location evidence="1">Host apical cell membrane</location>
        <topology evidence="1">Single-pass type II membrane protein</topology>
    </subcellularLocation>
    <text evidence="1">Preferentially accumulates at the apical plasma membrane in infected polarized epithelial cells, which is the virus assembly site. Uses lipid rafts for cell surface transport and apical sorting. In the virion, forms a mushroom-shaped spike on the surface of the membrane.</text>
</comment>
<comment type="domain">
    <text evidence="1">Intact N-terminus is essential for virion morphogenesis. Possesses two apical sorting signals, one in the ectodomain, which is likely to be a glycan, and the other in the transmembrane domain. The transmembrane domain also plays a role in lipid raft association.</text>
</comment>
<comment type="PTM">
    <text evidence="1">N-glycosylated.</text>
</comment>
<comment type="miscellaneous">
    <text>The influenza A genome consist of 8 RNA segments. Genetic variation of hemagglutinin and/or neuraminidase genes results in the emergence of new influenza strains. The mechanism of variation can be the result of point mutations or the result of genetic reassortment between segments of two different strains.</text>
</comment>
<comment type="similarity">
    <text evidence="1">Belongs to the glycosyl hydrolase 34 family.</text>
</comment>
<organismHost>
    <name type="scientific">Aves</name>
    <dbReference type="NCBI Taxonomy" id="8782"/>
</organismHost>
<organismHost>
    <name type="scientific">Homo sapiens</name>
    <name type="common">Human</name>
    <dbReference type="NCBI Taxonomy" id="9606"/>
</organismHost>
<organismHost>
    <name type="scientific">Sus scrofa</name>
    <name type="common">Pig</name>
    <dbReference type="NCBI Taxonomy" id="9823"/>
</organismHost>
<feature type="chain" id="PRO_0000372972" description="Neuraminidase">
    <location>
        <begin position="1"/>
        <end position="469"/>
    </location>
</feature>
<feature type="topological domain" description="Intravirion" evidence="1">
    <location>
        <begin position="1"/>
        <end position="6"/>
    </location>
</feature>
<feature type="transmembrane region" description="Helical" evidence="1">
    <location>
        <begin position="7"/>
        <end position="27"/>
    </location>
</feature>
<feature type="topological domain" description="Virion surface" evidence="1">
    <location>
        <begin position="28"/>
        <end position="469"/>
    </location>
</feature>
<feature type="region of interest" description="Involved in apical transport and lipid raft association" evidence="1">
    <location>
        <begin position="11"/>
        <end position="33"/>
    </location>
</feature>
<feature type="region of interest" description="Hypervariable stalk region" evidence="1">
    <location>
        <begin position="36"/>
        <end position="90"/>
    </location>
</feature>
<feature type="region of interest" description="Head of neuraminidase" evidence="1">
    <location>
        <begin position="91"/>
        <end position="469"/>
    </location>
</feature>
<feature type="active site" description="Proton donor/acceptor" evidence="1">
    <location>
        <position position="151"/>
    </location>
</feature>
<feature type="active site" description="Nucleophile" evidence="1">
    <location>
        <position position="402"/>
    </location>
</feature>
<feature type="binding site" evidence="1">
    <location>
        <position position="118"/>
    </location>
    <ligand>
        <name>substrate</name>
    </ligand>
</feature>
<feature type="binding site" evidence="1">
    <location>
        <position position="152"/>
    </location>
    <ligand>
        <name>substrate</name>
    </ligand>
</feature>
<feature type="binding site" evidence="1">
    <location>
        <begin position="277"/>
        <end position="278"/>
    </location>
    <ligand>
        <name>substrate</name>
    </ligand>
</feature>
<feature type="binding site" evidence="1">
    <location>
        <position position="293"/>
    </location>
    <ligand>
        <name>substrate</name>
    </ligand>
</feature>
<feature type="binding site" evidence="1">
    <location>
        <position position="294"/>
    </location>
    <ligand>
        <name>Ca(2+)</name>
        <dbReference type="ChEBI" id="CHEBI:29108"/>
    </ligand>
</feature>
<feature type="binding site" evidence="1">
    <location>
        <position position="324"/>
    </location>
    <ligand>
        <name>Ca(2+)</name>
        <dbReference type="ChEBI" id="CHEBI:29108"/>
    </ligand>
</feature>
<feature type="binding site" evidence="1">
    <location>
        <position position="344"/>
    </location>
    <ligand>
        <name>Ca(2+)</name>
        <dbReference type="ChEBI" id="CHEBI:29108"/>
    </ligand>
</feature>
<feature type="binding site" evidence="1">
    <location>
        <position position="368"/>
    </location>
    <ligand>
        <name>substrate</name>
    </ligand>
</feature>
<feature type="glycosylation site" description="N-linked (GlcNAc...) asparagine; by host" evidence="1">
    <location>
        <position position="50"/>
    </location>
</feature>
<feature type="glycosylation site" description="N-linked (GlcNAc...) asparagine; by host" evidence="1">
    <location>
        <position position="58"/>
    </location>
</feature>
<feature type="glycosylation site" description="N-linked (GlcNAc...) asparagine; by host" evidence="1">
    <location>
        <position position="63"/>
    </location>
</feature>
<feature type="glycosylation site" description="N-linked (GlcNAc...) asparagine; by host" evidence="1">
    <location>
        <position position="68"/>
    </location>
</feature>
<feature type="glycosylation site" description="N-linked (GlcNAc...) asparagine; by host" evidence="1">
    <location>
        <position position="146"/>
    </location>
</feature>
<feature type="glycosylation site" description="N-linked (GlcNAc...) asparagine; by host" evidence="1">
    <location>
        <position position="235"/>
    </location>
</feature>
<feature type="glycosylation site" description="N-linked (GlcNAc...) asparagine; by host" evidence="1">
    <location>
        <position position="454"/>
    </location>
</feature>
<feature type="disulfide bond" evidence="1">
    <location>
        <begin position="92"/>
        <end position="417"/>
    </location>
</feature>
<feature type="disulfide bond" evidence="1">
    <location>
        <begin position="124"/>
        <end position="129"/>
    </location>
</feature>
<feature type="disulfide bond" evidence="1">
    <location>
        <begin position="184"/>
        <end position="231"/>
    </location>
</feature>
<feature type="disulfide bond" evidence="1">
    <location>
        <begin position="233"/>
        <end position="238"/>
    </location>
</feature>
<feature type="disulfide bond" evidence="1">
    <location>
        <begin position="279"/>
        <end position="292"/>
    </location>
</feature>
<feature type="disulfide bond" evidence="1">
    <location>
        <begin position="281"/>
        <end position="290"/>
    </location>
</feature>
<feature type="disulfide bond" evidence="1">
    <location>
        <begin position="318"/>
        <end position="335"/>
    </location>
</feature>
<feature type="disulfide bond" evidence="1">
    <location>
        <begin position="421"/>
        <end position="446"/>
    </location>
</feature>
<sequence>MNTNQRIITIGTICLIVGIISLLLQIGNIISLWISHSIQTREKNHPEVCNQSVITYENNTWVNQTYVNISNANIVAGQGVTSIILAGNSPLCPISGWAIYSKDNSIRIGSKGDIFVMREPFISCSHLECRTFFLTQGALLNDKHSNGTVKDRSPYRTLMSCPIGEAPSPYNSRFESVAWSASACHDGMGWLTIGISGPDNGAVAVLKYNGIITDTIKSWRNKILRTQESECVCINGSCFTIMTDGPSNGQASYKIFKMEKGRIIKSIELDAPNYHYEECSCYPDTGKVVCVCRDNWHASNRPWVSFDQNLNYQIGYICSGVFGDNPRSNDGKGNCGPVLSNGANGVKGFSFRYGNGVWIGRTKSISSRSGFEMIWDPNGWTETDSSFSMKQDIIASTDWSGYSGSFVQHPELTGMDCIRPCFWVELIRGQPKESTIWTSGSSISFCGVNSGTANWSWPDGADLPFTIDK</sequence>
<proteinExistence type="inferred from homology"/>
<protein>
    <recommendedName>
        <fullName evidence="1">Neuraminidase</fullName>
        <ecNumber evidence="1">3.2.1.18</ecNumber>
    </recommendedName>
</protein>
<gene>
    <name evidence="1" type="primary">NA</name>
</gene>
<reference key="1">
    <citation type="submission" date="2007-10" db="EMBL/GenBank/DDBJ databases">
        <title>The NIAID influenza genome sequencing project.</title>
        <authorList>
            <person name="Ghedin E."/>
            <person name="Spiro D."/>
            <person name="Miller N."/>
            <person name="Zaborsky J."/>
            <person name="Feldblyum T."/>
            <person name="Subbu V."/>
            <person name="Shumway M."/>
            <person name="Sparenborg J."/>
            <person name="Groveman L."/>
            <person name="Halpin R."/>
            <person name="Sitz J."/>
            <person name="Koo H."/>
            <person name="Salzberg S.L."/>
            <person name="Webster R.G."/>
            <person name="Hoffmann E."/>
            <person name="Krauss S."/>
            <person name="Naeve C."/>
            <person name="Bao Y."/>
            <person name="Bolotov P."/>
            <person name="Dernovoy D."/>
            <person name="Kiryutin B."/>
            <person name="Lipman D.J."/>
            <person name="Tatusova T."/>
        </authorList>
    </citation>
    <scope>NUCLEOTIDE SEQUENCE [GENOMIC RNA]</scope>
</reference>
<reference key="2">
    <citation type="submission" date="2007-10" db="EMBL/GenBank/DDBJ databases">
        <authorList>
            <consortium name="The NIAID Influenza Genome Sequencing Consortium"/>
        </authorList>
    </citation>
    <scope>NUCLEOTIDE SEQUENCE [GENOMIC RNA]</scope>
</reference>